<evidence type="ECO:0000250" key="1"/>
<evidence type="ECO:0000250" key="2">
    <source>
        <dbReference type="UniProtKB" id="Q99895"/>
    </source>
</evidence>
<evidence type="ECO:0000255" key="3"/>
<evidence type="ECO:0000255" key="4">
    <source>
        <dbReference type="PROSITE-ProRule" id="PRU00274"/>
    </source>
</evidence>
<evidence type="ECO:0000269" key="5">
    <source>
    </source>
</evidence>
<sequence>MLGITVLAAILACASSCGDPTFPPNLSARVVGGEDAVPNSWPWQVSLQYLRDDTWRHTCGGSLITTSHVLTAAHCINTNLTYRVGLGKYNLTVEDEEGSVYAEVDTIYVHEKWNRLLLWNDIAIIKLAEPVELSDTIQVACIPEQDSLLPGDYPCYVTGWGRLWTNGPIAEVLQQGLQPIVNHTTCSRLDWWFIKVRETMVCAGGDGVISACNGDSGGPLNCPVEDGLWQVHGIVSFGSSRGCNTYKKPVVFTRVSAYIDWIKEKIQL</sequence>
<gene>
    <name type="primary">Ctrc</name>
</gene>
<reference key="1">
    <citation type="journal article" date="2004" name="Genome Res.">
        <title>The status, quality, and expansion of the NIH full-length cDNA project: the Mammalian Gene Collection (MGC).</title>
        <authorList>
            <consortium name="The MGC Project Team"/>
        </authorList>
    </citation>
    <scope>NUCLEOTIDE SEQUENCE [LARGE SCALE MRNA]</scope>
    <source>
        <tissue>Pancreas</tissue>
    </source>
</reference>
<reference key="2">
    <citation type="journal article" date="2010" name="Cell">
        <title>A tissue-specific atlas of mouse protein phosphorylation and expression.</title>
        <authorList>
            <person name="Huttlin E.L."/>
            <person name="Jedrychowski M.P."/>
            <person name="Elias J.E."/>
            <person name="Goswami T."/>
            <person name="Rad R."/>
            <person name="Beausoleil S.A."/>
            <person name="Villen J."/>
            <person name="Haas W."/>
            <person name="Sowa M.E."/>
            <person name="Gygi S.P."/>
        </authorList>
    </citation>
    <scope>IDENTIFICATION BY MASS SPECTROMETRY [LARGE SCALE ANALYSIS]</scope>
    <source>
        <tissue>Pancreas</tissue>
        <tissue>Spleen</tissue>
    </source>
</reference>
<reference key="3">
    <citation type="journal article" date="2013" name="J. Biol. Chem.">
        <title>Autoactivation of mouse trypsinogens is regulated by chymotrypsin C via cleavage of the autolysis loop.</title>
        <authorList>
            <person name="Nemeth B.C."/>
            <person name="Wartmann T."/>
            <person name="Halangk W."/>
            <person name="Sahin-Toth M."/>
        </authorList>
    </citation>
    <scope>FUNCTION</scope>
    <scope>CATALYTIC ACTIVITY</scope>
</reference>
<organism>
    <name type="scientific">Mus musculus</name>
    <name type="common">Mouse</name>
    <dbReference type="NCBI Taxonomy" id="10090"/>
    <lineage>
        <taxon>Eukaryota</taxon>
        <taxon>Metazoa</taxon>
        <taxon>Chordata</taxon>
        <taxon>Craniata</taxon>
        <taxon>Vertebrata</taxon>
        <taxon>Euteleostomi</taxon>
        <taxon>Mammalia</taxon>
        <taxon>Eutheria</taxon>
        <taxon>Euarchontoglires</taxon>
        <taxon>Glires</taxon>
        <taxon>Rodentia</taxon>
        <taxon>Myomorpha</taxon>
        <taxon>Muroidea</taxon>
        <taxon>Muridae</taxon>
        <taxon>Murinae</taxon>
        <taxon>Mus</taxon>
        <taxon>Mus</taxon>
    </lineage>
</organism>
<keyword id="KW-1015">Disulfide bond</keyword>
<keyword id="KW-0325">Glycoprotein</keyword>
<keyword id="KW-0378">Hydrolase</keyword>
<keyword id="KW-0645">Protease</keyword>
<keyword id="KW-1185">Reference proteome</keyword>
<keyword id="KW-0720">Serine protease</keyword>
<keyword id="KW-0732">Signal</keyword>
<keyword id="KW-0865">Zymogen</keyword>
<protein>
    <recommendedName>
        <fullName>Chymotrypsin-C</fullName>
        <ecNumber evidence="5">3.4.21.2</ecNumber>
    </recommendedName>
</protein>
<feature type="signal peptide" evidence="3">
    <location>
        <begin position="1"/>
        <end position="16"/>
    </location>
</feature>
<feature type="propeptide" id="PRO_0000288616" description="Activation peptide" evidence="1">
    <location>
        <begin position="17"/>
        <end position="29"/>
    </location>
</feature>
<feature type="chain" id="PRO_0000288617" description="Chymotrypsin-C">
    <location>
        <begin position="30"/>
        <end position="268"/>
    </location>
</feature>
<feature type="domain" description="Peptidase S1" evidence="4">
    <location>
        <begin position="30"/>
        <end position="267"/>
    </location>
</feature>
<feature type="active site" description="Charge relay system" evidence="1">
    <location>
        <position position="74"/>
    </location>
</feature>
<feature type="active site" description="Charge relay system" evidence="1">
    <location>
        <position position="121"/>
    </location>
</feature>
<feature type="active site" description="Charge relay system" evidence="1">
    <location>
        <position position="216"/>
    </location>
</feature>
<feature type="glycosylation site" description="N-linked (GlcNAc...) asparagine" evidence="3">
    <location>
        <position position="25"/>
    </location>
</feature>
<feature type="glycosylation site" description="N-linked (GlcNAc...) asparagine" evidence="3">
    <location>
        <position position="79"/>
    </location>
</feature>
<feature type="glycosylation site" description="N-linked (GlcNAc...) asparagine" evidence="3">
    <location>
        <position position="90"/>
    </location>
</feature>
<feature type="glycosylation site" description="N-linked (GlcNAc...) asparagine" evidence="3">
    <location>
        <position position="182"/>
    </location>
</feature>
<feature type="disulfide bond" evidence="4">
    <location>
        <begin position="17"/>
        <end position="141"/>
    </location>
</feature>
<feature type="disulfide bond" evidence="4">
    <location>
        <begin position="59"/>
        <end position="75"/>
    </location>
</feature>
<feature type="disulfide bond" evidence="4">
    <location>
        <begin position="155"/>
        <end position="222"/>
    </location>
</feature>
<feature type="disulfide bond" evidence="4">
    <location>
        <begin position="186"/>
        <end position="202"/>
    </location>
</feature>
<feature type="disulfide bond" evidence="4">
    <location>
        <begin position="212"/>
        <end position="243"/>
    </location>
</feature>
<dbReference type="EC" id="3.4.21.2" evidence="5"/>
<dbReference type="EMBL" id="BC103715">
    <property type="protein sequence ID" value="AAI03716.1"/>
    <property type="molecule type" value="mRNA"/>
</dbReference>
<dbReference type="EMBL" id="BC115516">
    <property type="protein sequence ID" value="AAI15517.1"/>
    <property type="molecule type" value="mRNA"/>
</dbReference>
<dbReference type="EMBL" id="BC115517">
    <property type="protein sequence ID" value="AAI15518.1"/>
    <property type="molecule type" value="mRNA"/>
</dbReference>
<dbReference type="RefSeq" id="NP_001029047.1">
    <property type="nucleotide sequence ID" value="NM_001033875.2"/>
</dbReference>
<dbReference type="SMR" id="Q3SYP2"/>
<dbReference type="FunCoup" id="Q3SYP2">
    <property type="interactions" value="106"/>
</dbReference>
<dbReference type="STRING" id="10090.ENSMUSP00000039879"/>
<dbReference type="MEROPS" id="S01.157"/>
<dbReference type="GlyCosmos" id="Q3SYP2">
    <property type="glycosylation" value="4 sites, No reported glycans"/>
</dbReference>
<dbReference type="GlyGen" id="Q3SYP2">
    <property type="glycosylation" value="4 sites"/>
</dbReference>
<dbReference type="PaxDb" id="10090-ENSMUSP00000039879"/>
<dbReference type="ProteomicsDB" id="285419"/>
<dbReference type="DNASU" id="76701"/>
<dbReference type="GeneID" id="76701"/>
<dbReference type="KEGG" id="mmu:76701"/>
<dbReference type="UCSC" id="uc008vpk.1">
    <property type="organism name" value="mouse"/>
</dbReference>
<dbReference type="AGR" id="MGI:1923951"/>
<dbReference type="CTD" id="11330"/>
<dbReference type="MGI" id="MGI:1923951">
    <property type="gene designation" value="Ctrc"/>
</dbReference>
<dbReference type="eggNOG" id="KOG3627">
    <property type="taxonomic scope" value="Eukaryota"/>
</dbReference>
<dbReference type="InParanoid" id="Q3SYP2"/>
<dbReference type="PhylomeDB" id="Q3SYP2"/>
<dbReference type="BioGRID-ORCS" id="76701">
    <property type="hits" value="1 hit in 71 CRISPR screens"/>
</dbReference>
<dbReference type="ChiTaRS" id="Ctrc">
    <property type="organism name" value="mouse"/>
</dbReference>
<dbReference type="PRO" id="PR:Q3SYP2"/>
<dbReference type="Proteomes" id="UP000000589">
    <property type="component" value="Unplaced"/>
</dbReference>
<dbReference type="RNAct" id="Q3SYP2">
    <property type="molecule type" value="protein"/>
</dbReference>
<dbReference type="GO" id="GO:0008233">
    <property type="term" value="F:peptidase activity"/>
    <property type="evidence" value="ECO:0000266"/>
    <property type="project" value="MGI"/>
</dbReference>
<dbReference type="GO" id="GO:0004252">
    <property type="term" value="F:serine-type endopeptidase activity"/>
    <property type="evidence" value="ECO:0000314"/>
    <property type="project" value="MGI"/>
</dbReference>
<dbReference type="GO" id="GO:0006874">
    <property type="term" value="P:intracellular calcium ion homeostasis"/>
    <property type="evidence" value="ECO:0000266"/>
    <property type="project" value="MGI"/>
</dbReference>
<dbReference type="GO" id="GO:0006508">
    <property type="term" value="P:proteolysis"/>
    <property type="evidence" value="ECO:0000266"/>
    <property type="project" value="MGI"/>
</dbReference>
<dbReference type="CDD" id="cd00190">
    <property type="entry name" value="Tryp_SPc"/>
    <property type="match status" value="1"/>
</dbReference>
<dbReference type="FunFam" id="2.40.10.10:FF:000017">
    <property type="entry name" value="Chymotrypsin-like elastase family member 1"/>
    <property type="match status" value="1"/>
</dbReference>
<dbReference type="FunFam" id="2.40.10.10:FF:000068">
    <property type="entry name" value="transmembrane protease serine 2"/>
    <property type="match status" value="1"/>
</dbReference>
<dbReference type="Gene3D" id="2.40.10.10">
    <property type="entry name" value="Trypsin-like serine proteases"/>
    <property type="match status" value="2"/>
</dbReference>
<dbReference type="InterPro" id="IPR050850">
    <property type="entry name" value="Peptidase_S1_Elastase_sf"/>
</dbReference>
<dbReference type="InterPro" id="IPR009003">
    <property type="entry name" value="Peptidase_S1_PA"/>
</dbReference>
<dbReference type="InterPro" id="IPR043504">
    <property type="entry name" value="Peptidase_S1_PA_chymotrypsin"/>
</dbReference>
<dbReference type="InterPro" id="IPR001314">
    <property type="entry name" value="Peptidase_S1A"/>
</dbReference>
<dbReference type="InterPro" id="IPR001254">
    <property type="entry name" value="Trypsin_dom"/>
</dbReference>
<dbReference type="InterPro" id="IPR018114">
    <property type="entry name" value="TRYPSIN_HIS"/>
</dbReference>
<dbReference type="InterPro" id="IPR033116">
    <property type="entry name" value="TRYPSIN_SER"/>
</dbReference>
<dbReference type="PANTHER" id="PTHR24257">
    <property type="entry name" value="CHYMOTRYPSIN-LIKE ELASTASE FAMILY MEMBER"/>
    <property type="match status" value="1"/>
</dbReference>
<dbReference type="PANTHER" id="PTHR24257:SF31">
    <property type="entry name" value="ELASTASE 3 LIKE ISOFORM X1"/>
    <property type="match status" value="1"/>
</dbReference>
<dbReference type="Pfam" id="PF00089">
    <property type="entry name" value="Trypsin"/>
    <property type="match status" value="1"/>
</dbReference>
<dbReference type="PRINTS" id="PR00722">
    <property type="entry name" value="CHYMOTRYPSIN"/>
</dbReference>
<dbReference type="SMART" id="SM00020">
    <property type="entry name" value="Tryp_SPc"/>
    <property type="match status" value="1"/>
</dbReference>
<dbReference type="SUPFAM" id="SSF50494">
    <property type="entry name" value="Trypsin-like serine proteases"/>
    <property type="match status" value="1"/>
</dbReference>
<dbReference type="PROSITE" id="PS50240">
    <property type="entry name" value="TRYPSIN_DOM"/>
    <property type="match status" value="1"/>
</dbReference>
<dbReference type="PROSITE" id="PS00134">
    <property type="entry name" value="TRYPSIN_HIS"/>
    <property type="match status" value="1"/>
</dbReference>
<dbReference type="PROSITE" id="PS00135">
    <property type="entry name" value="TRYPSIN_SER"/>
    <property type="match status" value="1"/>
</dbReference>
<comment type="function">
    <text evidence="2 5">Regulates activation and degradation of trypsinogens and procarboxypeptidases by targeting specific cleavage sites within their zymogen precursors (By similarity). Has chymotrypsin-type protease activity and hypocalcemic activity (PubMed:23814066). Cleaves TRY4 and TRY5 and thereby inhibits their autoactivation (PubMed:23814066).</text>
</comment>
<comment type="catalytic activity">
    <reaction evidence="5">
        <text>Preferential cleavage: Leu-|-Xaa, Tyr-|-Xaa, Phe-|-Xaa, Met-|-Xaa, Trp-|-Xaa, Gln-|-Xaa, Asn-|-Xaa.</text>
        <dbReference type="EC" id="3.4.21.2"/>
    </reaction>
</comment>
<comment type="similarity">
    <text evidence="4">Belongs to the peptidase S1 family. Elastase subfamily.</text>
</comment>
<accession>Q3SYP2</accession>
<name>CTRC_MOUSE</name>
<proteinExistence type="evidence at protein level"/>